<proteinExistence type="inferred from homology"/>
<evidence type="ECO:0000255" key="1">
    <source>
        <dbReference type="HAMAP-Rule" id="MF_00016"/>
    </source>
</evidence>
<protein>
    <recommendedName>
        <fullName evidence="1">Holliday junction branch migration complex subunit RuvB</fullName>
        <ecNumber evidence="1">3.6.4.-</ecNumber>
    </recommendedName>
</protein>
<gene>
    <name evidence="1" type="primary">ruvB</name>
    <name type="ordered locus">AnaeK_1014</name>
</gene>
<feature type="chain" id="PRO_1000089616" description="Holliday junction branch migration complex subunit RuvB">
    <location>
        <begin position="1"/>
        <end position="342"/>
    </location>
</feature>
<feature type="region of interest" description="Large ATPase domain (RuvB-L)" evidence="1">
    <location>
        <begin position="1"/>
        <end position="185"/>
    </location>
</feature>
<feature type="region of interest" description="Small ATPAse domain (RuvB-S)" evidence="1">
    <location>
        <begin position="186"/>
        <end position="256"/>
    </location>
</feature>
<feature type="region of interest" description="Head domain (RuvB-H)" evidence="1">
    <location>
        <begin position="259"/>
        <end position="342"/>
    </location>
</feature>
<feature type="binding site" evidence="1">
    <location>
        <position position="24"/>
    </location>
    <ligand>
        <name>ATP</name>
        <dbReference type="ChEBI" id="CHEBI:30616"/>
    </ligand>
</feature>
<feature type="binding site" evidence="1">
    <location>
        <position position="25"/>
    </location>
    <ligand>
        <name>ATP</name>
        <dbReference type="ChEBI" id="CHEBI:30616"/>
    </ligand>
</feature>
<feature type="binding site" evidence="1">
    <location>
        <position position="66"/>
    </location>
    <ligand>
        <name>ATP</name>
        <dbReference type="ChEBI" id="CHEBI:30616"/>
    </ligand>
</feature>
<feature type="binding site" evidence="1">
    <location>
        <position position="69"/>
    </location>
    <ligand>
        <name>ATP</name>
        <dbReference type="ChEBI" id="CHEBI:30616"/>
    </ligand>
</feature>
<feature type="binding site" evidence="1">
    <location>
        <position position="70"/>
    </location>
    <ligand>
        <name>ATP</name>
        <dbReference type="ChEBI" id="CHEBI:30616"/>
    </ligand>
</feature>
<feature type="binding site" evidence="1">
    <location>
        <position position="70"/>
    </location>
    <ligand>
        <name>Mg(2+)</name>
        <dbReference type="ChEBI" id="CHEBI:18420"/>
    </ligand>
</feature>
<feature type="binding site" evidence="1">
    <location>
        <position position="71"/>
    </location>
    <ligand>
        <name>ATP</name>
        <dbReference type="ChEBI" id="CHEBI:30616"/>
    </ligand>
</feature>
<feature type="binding site" evidence="1">
    <location>
        <begin position="132"/>
        <end position="134"/>
    </location>
    <ligand>
        <name>ATP</name>
        <dbReference type="ChEBI" id="CHEBI:30616"/>
    </ligand>
</feature>
<feature type="binding site" evidence="1">
    <location>
        <position position="175"/>
    </location>
    <ligand>
        <name>ATP</name>
        <dbReference type="ChEBI" id="CHEBI:30616"/>
    </ligand>
</feature>
<feature type="binding site" evidence="1">
    <location>
        <position position="185"/>
    </location>
    <ligand>
        <name>ATP</name>
        <dbReference type="ChEBI" id="CHEBI:30616"/>
    </ligand>
</feature>
<feature type="binding site" evidence="1">
    <location>
        <position position="222"/>
    </location>
    <ligand>
        <name>ATP</name>
        <dbReference type="ChEBI" id="CHEBI:30616"/>
    </ligand>
</feature>
<feature type="binding site" evidence="1">
    <location>
        <position position="314"/>
    </location>
    <ligand>
        <name>DNA</name>
        <dbReference type="ChEBI" id="CHEBI:16991"/>
    </ligand>
</feature>
<feature type="binding site" evidence="1">
    <location>
        <position position="319"/>
    </location>
    <ligand>
        <name>DNA</name>
        <dbReference type="ChEBI" id="CHEBI:16991"/>
    </ligand>
</feature>
<keyword id="KW-0067">ATP-binding</keyword>
<keyword id="KW-0963">Cytoplasm</keyword>
<keyword id="KW-0227">DNA damage</keyword>
<keyword id="KW-0233">DNA recombination</keyword>
<keyword id="KW-0234">DNA repair</keyword>
<keyword id="KW-0238">DNA-binding</keyword>
<keyword id="KW-0378">Hydrolase</keyword>
<keyword id="KW-0547">Nucleotide-binding</keyword>
<accession>B4UFY1</accession>
<sequence length="342" mass="37192">MTVKPLRDVTPKPLEGEERLEQSLRPATFDDYVGQVKIVDNVKVYAAAARQRGESLDHVLLSGPPGLGKTSLAHILARELGVTLHVTSGPALVKKGDLAGLLTALAPRDILFIDEIHRLSPAVEEALYPAMEDYRFDVVLGAGLGAQTMEMKLERFTLVGATTRTGLLASPLRDRFPIQERLEYYGPAELKEIAVRAARKLGLPVDEDGAEELARRARGTPRIAIRLLQRARDFAQVEGDGRLTREVVDRTLRRLEVDARGLDAMDRRILAAVIDTFGGGPVGIDAVAAAVGEESGTLEDVYEPFLVREGYLARTPRGRVALPAAYAHLGRDRPGGKQGSLV</sequence>
<organism>
    <name type="scientific">Anaeromyxobacter sp. (strain K)</name>
    <dbReference type="NCBI Taxonomy" id="447217"/>
    <lineage>
        <taxon>Bacteria</taxon>
        <taxon>Pseudomonadati</taxon>
        <taxon>Myxococcota</taxon>
        <taxon>Myxococcia</taxon>
        <taxon>Myxococcales</taxon>
        <taxon>Cystobacterineae</taxon>
        <taxon>Anaeromyxobacteraceae</taxon>
        <taxon>Anaeromyxobacter</taxon>
    </lineage>
</organism>
<name>RUVB_ANASK</name>
<comment type="function">
    <text evidence="1">The RuvA-RuvB-RuvC complex processes Holliday junction (HJ) DNA during genetic recombination and DNA repair, while the RuvA-RuvB complex plays an important role in the rescue of blocked DNA replication forks via replication fork reversal (RFR). RuvA specifically binds to HJ cruciform DNA, conferring on it an open structure. The RuvB hexamer acts as an ATP-dependent pump, pulling dsDNA into and through the RuvAB complex. RuvB forms 2 homohexamers on either side of HJ DNA bound by 1 or 2 RuvA tetramers; 4 subunits per hexamer contact DNA at a time. Coordinated motions by a converter formed by DNA-disengaged RuvB subunits stimulates ATP hydrolysis and nucleotide exchange. Immobilization of the converter enables RuvB to convert the ATP-contained energy into a lever motion, pulling 2 nucleotides of DNA out of the RuvA tetramer per ATP hydrolyzed, thus driving DNA branch migration. The RuvB motors rotate together with the DNA substrate, which together with the progressing nucleotide cycle form the mechanistic basis for DNA recombination by continuous HJ branch migration. Branch migration allows RuvC to scan DNA until it finds its consensus sequence, where it cleaves and resolves cruciform DNA.</text>
</comment>
<comment type="catalytic activity">
    <reaction evidence="1">
        <text>ATP + H2O = ADP + phosphate + H(+)</text>
        <dbReference type="Rhea" id="RHEA:13065"/>
        <dbReference type="ChEBI" id="CHEBI:15377"/>
        <dbReference type="ChEBI" id="CHEBI:15378"/>
        <dbReference type="ChEBI" id="CHEBI:30616"/>
        <dbReference type="ChEBI" id="CHEBI:43474"/>
        <dbReference type="ChEBI" id="CHEBI:456216"/>
    </reaction>
</comment>
<comment type="subunit">
    <text evidence="1">Homohexamer. Forms an RuvA(8)-RuvB(12)-Holliday junction (HJ) complex. HJ DNA is sandwiched between 2 RuvA tetramers; dsDNA enters through RuvA and exits via RuvB. An RuvB hexamer assembles on each DNA strand where it exits the tetramer. Each RuvB hexamer is contacted by two RuvA subunits (via domain III) on 2 adjacent RuvB subunits; this complex drives branch migration. In the full resolvosome a probable DNA-RuvA(4)-RuvB(12)-RuvC(2) complex forms which resolves the HJ.</text>
</comment>
<comment type="subcellular location">
    <subcellularLocation>
        <location evidence="1">Cytoplasm</location>
    </subcellularLocation>
</comment>
<comment type="domain">
    <text evidence="1">Has 3 domains, the large (RuvB-L) and small ATPase (RuvB-S) domains and the C-terminal head (RuvB-H) domain. The head domain binds DNA, while the ATPase domains jointly bind ATP, ADP or are empty depending on the state of the subunit in the translocation cycle. During a single DNA translocation step the structure of each domain remains the same, but their relative positions change.</text>
</comment>
<comment type="similarity">
    <text evidence="1">Belongs to the RuvB family.</text>
</comment>
<dbReference type="EC" id="3.6.4.-" evidence="1"/>
<dbReference type="EMBL" id="CP001131">
    <property type="protein sequence ID" value="ACG72249.1"/>
    <property type="molecule type" value="Genomic_DNA"/>
</dbReference>
<dbReference type="RefSeq" id="WP_012525076.1">
    <property type="nucleotide sequence ID" value="NC_011145.1"/>
</dbReference>
<dbReference type="SMR" id="B4UFY1"/>
<dbReference type="KEGG" id="ank:AnaeK_1014"/>
<dbReference type="HOGENOM" id="CLU_055599_1_0_7"/>
<dbReference type="OrthoDB" id="9804478at2"/>
<dbReference type="Proteomes" id="UP000001871">
    <property type="component" value="Chromosome"/>
</dbReference>
<dbReference type="GO" id="GO:0005737">
    <property type="term" value="C:cytoplasm"/>
    <property type="evidence" value="ECO:0007669"/>
    <property type="project" value="UniProtKB-SubCell"/>
</dbReference>
<dbReference type="GO" id="GO:0048476">
    <property type="term" value="C:Holliday junction resolvase complex"/>
    <property type="evidence" value="ECO:0007669"/>
    <property type="project" value="UniProtKB-UniRule"/>
</dbReference>
<dbReference type="GO" id="GO:0005524">
    <property type="term" value="F:ATP binding"/>
    <property type="evidence" value="ECO:0007669"/>
    <property type="project" value="UniProtKB-UniRule"/>
</dbReference>
<dbReference type="GO" id="GO:0016887">
    <property type="term" value="F:ATP hydrolysis activity"/>
    <property type="evidence" value="ECO:0007669"/>
    <property type="project" value="InterPro"/>
</dbReference>
<dbReference type="GO" id="GO:0000400">
    <property type="term" value="F:four-way junction DNA binding"/>
    <property type="evidence" value="ECO:0007669"/>
    <property type="project" value="UniProtKB-UniRule"/>
</dbReference>
<dbReference type="GO" id="GO:0009378">
    <property type="term" value="F:four-way junction helicase activity"/>
    <property type="evidence" value="ECO:0007669"/>
    <property type="project" value="InterPro"/>
</dbReference>
<dbReference type="GO" id="GO:0006310">
    <property type="term" value="P:DNA recombination"/>
    <property type="evidence" value="ECO:0007669"/>
    <property type="project" value="UniProtKB-UniRule"/>
</dbReference>
<dbReference type="GO" id="GO:0006281">
    <property type="term" value="P:DNA repair"/>
    <property type="evidence" value="ECO:0007669"/>
    <property type="project" value="UniProtKB-UniRule"/>
</dbReference>
<dbReference type="CDD" id="cd00009">
    <property type="entry name" value="AAA"/>
    <property type="match status" value="1"/>
</dbReference>
<dbReference type="Gene3D" id="1.10.8.60">
    <property type="match status" value="1"/>
</dbReference>
<dbReference type="Gene3D" id="3.40.50.300">
    <property type="entry name" value="P-loop containing nucleotide triphosphate hydrolases"/>
    <property type="match status" value="1"/>
</dbReference>
<dbReference type="Gene3D" id="1.10.10.10">
    <property type="entry name" value="Winged helix-like DNA-binding domain superfamily/Winged helix DNA-binding domain"/>
    <property type="match status" value="1"/>
</dbReference>
<dbReference type="HAMAP" id="MF_00016">
    <property type="entry name" value="DNA_HJ_migration_RuvB"/>
    <property type="match status" value="1"/>
</dbReference>
<dbReference type="InterPro" id="IPR003593">
    <property type="entry name" value="AAA+_ATPase"/>
</dbReference>
<dbReference type="InterPro" id="IPR041445">
    <property type="entry name" value="AAA_lid_4"/>
</dbReference>
<dbReference type="InterPro" id="IPR000641">
    <property type="entry name" value="CbxX/CfxQ"/>
</dbReference>
<dbReference type="InterPro" id="IPR004605">
    <property type="entry name" value="DNA_helicase_Holl-junc_RuvB"/>
</dbReference>
<dbReference type="InterPro" id="IPR027417">
    <property type="entry name" value="P-loop_NTPase"/>
</dbReference>
<dbReference type="InterPro" id="IPR008824">
    <property type="entry name" value="RuvB-like_N"/>
</dbReference>
<dbReference type="InterPro" id="IPR008823">
    <property type="entry name" value="RuvB_C"/>
</dbReference>
<dbReference type="InterPro" id="IPR036388">
    <property type="entry name" value="WH-like_DNA-bd_sf"/>
</dbReference>
<dbReference type="InterPro" id="IPR036390">
    <property type="entry name" value="WH_DNA-bd_sf"/>
</dbReference>
<dbReference type="NCBIfam" id="NF000868">
    <property type="entry name" value="PRK00080.1"/>
    <property type="match status" value="1"/>
</dbReference>
<dbReference type="NCBIfam" id="TIGR00635">
    <property type="entry name" value="ruvB"/>
    <property type="match status" value="1"/>
</dbReference>
<dbReference type="PANTHER" id="PTHR42848">
    <property type="match status" value="1"/>
</dbReference>
<dbReference type="PANTHER" id="PTHR42848:SF1">
    <property type="entry name" value="HOLLIDAY JUNCTION BRANCH MIGRATION COMPLEX SUBUNIT RUVB"/>
    <property type="match status" value="1"/>
</dbReference>
<dbReference type="Pfam" id="PF17864">
    <property type="entry name" value="AAA_lid_4"/>
    <property type="match status" value="1"/>
</dbReference>
<dbReference type="Pfam" id="PF05491">
    <property type="entry name" value="RuvB_C"/>
    <property type="match status" value="1"/>
</dbReference>
<dbReference type="Pfam" id="PF05496">
    <property type="entry name" value="RuvB_N"/>
    <property type="match status" value="1"/>
</dbReference>
<dbReference type="PRINTS" id="PR00819">
    <property type="entry name" value="CBXCFQXSUPER"/>
</dbReference>
<dbReference type="SMART" id="SM00382">
    <property type="entry name" value="AAA"/>
    <property type="match status" value="1"/>
</dbReference>
<dbReference type="SUPFAM" id="SSF52540">
    <property type="entry name" value="P-loop containing nucleoside triphosphate hydrolases"/>
    <property type="match status" value="1"/>
</dbReference>
<dbReference type="SUPFAM" id="SSF46785">
    <property type="entry name" value="Winged helix' DNA-binding domain"/>
    <property type="match status" value="1"/>
</dbReference>
<reference key="1">
    <citation type="submission" date="2008-08" db="EMBL/GenBank/DDBJ databases">
        <title>Complete sequence of Anaeromyxobacter sp. K.</title>
        <authorList>
            <consortium name="US DOE Joint Genome Institute"/>
            <person name="Lucas S."/>
            <person name="Copeland A."/>
            <person name="Lapidus A."/>
            <person name="Glavina del Rio T."/>
            <person name="Dalin E."/>
            <person name="Tice H."/>
            <person name="Bruce D."/>
            <person name="Goodwin L."/>
            <person name="Pitluck S."/>
            <person name="Saunders E."/>
            <person name="Brettin T."/>
            <person name="Detter J.C."/>
            <person name="Han C."/>
            <person name="Larimer F."/>
            <person name="Land M."/>
            <person name="Hauser L."/>
            <person name="Kyrpides N."/>
            <person name="Ovchinnikiva G."/>
            <person name="Beliaev A."/>
        </authorList>
    </citation>
    <scope>NUCLEOTIDE SEQUENCE [LARGE SCALE GENOMIC DNA]</scope>
    <source>
        <strain>K</strain>
    </source>
</reference>